<organism>
    <name type="scientific">Shigella dysenteriae serotype 1 (strain Sd197)</name>
    <dbReference type="NCBI Taxonomy" id="300267"/>
    <lineage>
        <taxon>Bacteria</taxon>
        <taxon>Pseudomonadati</taxon>
        <taxon>Pseudomonadota</taxon>
        <taxon>Gammaproteobacteria</taxon>
        <taxon>Enterobacterales</taxon>
        <taxon>Enterobacteriaceae</taxon>
        <taxon>Shigella</taxon>
    </lineage>
</organism>
<proteinExistence type="uncertain"/>
<evidence type="ECO:0000255" key="1">
    <source>
        <dbReference type="HAMAP-Rule" id="MF_01951"/>
    </source>
</evidence>
<evidence type="ECO:0000305" key="2"/>
<name>ULAE_SHIDS</name>
<gene>
    <name evidence="1" type="primary">ulaE</name>
    <name type="ordered locus">SDY_4366</name>
</gene>
<accession>P0C1B2</accession>
<reference key="1">
    <citation type="journal article" date="2005" name="Nucleic Acids Res.">
        <title>Genome dynamics and diversity of Shigella species, the etiologic agents of bacillary dysentery.</title>
        <authorList>
            <person name="Yang F."/>
            <person name="Yang J."/>
            <person name="Zhang X."/>
            <person name="Chen L."/>
            <person name="Jiang Y."/>
            <person name="Yan Y."/>
            <person name="Tang X."/>
            <person name="Wang J."/>
            <person name="Xiong Z."/>
            <person name="Dong J."/>
            <person name="Xue Y."/>
            <person name="Zhu Y."/>
            <person name="Xu X."/>
            <person name="Sun L."/>
            <person name="Chen S."/>
            <person name="Nie H."/>
            <person name="Peng J."/>
            <person name="Xu J."/>
            <person name="Wang Y."/>
            <person name="Yuan Z."/>
            <person name="Wen Y."/>
            <person name="Yao Z."/>
            <person name="Shen Y."/>
            <person name="Qiang B."/>
            <person name="Hou Y."/>
            <person name="Yu J."/>
            <person name="Jin Q."/>
        </authorList>
    </citation>
    <scope>NUCLEOTIDE SEQUENCE [LARGE SCALE GENOMIC DNA]</scope>
    <source>
        <strain>Sd197</strain>
    </source>
</reference>
<comment type="function">
    <text evidence="1">Catalyzes the isomerization of L-xylulose-5-phosphate to L-ribulose-5-phosphate. Is involved in the anaerobic L-ascorbate utilization.</text>
</comment>
<comment type="catalytic activity">
    <reaction evidence="1">
        <text>L-ribulose 5-phosphate = L-xylulose 5-phosphate</text>
        <dbReference type="Rhea" id="RHEA:18497"/>
        <dbReference type="ChEBI" id="CHEBI:57829"/>
        <dbReference type="ChEBI" id="CHEBI:58226"/>
        <dbReference type="EC" id="5.1.3.22"/>
    </reaction>
</comment>
<comment type="pathway">
    <text evidence="1">Cofactor degradation; L-ascorbate degradation; D-xylulose 5-phosphate from L-ascorbate: step 3/4.</text>
</comment>
<comment type="induction">
    <text evidence="1">Induced by L-ascorbate. Repressed by UlaR.</text>
</comment>
<comment type="similarity">
    <text evidence="1">Belongs to the L-ribulose-5-phosphate 3-epimerase family.</text>
</comment>
<comment type="caution">
    <text evidence="2">Could be the product of a pseudogene.</text>
</comment>
<comment type="sequence caution" evidence="2">
    <conflict type="erroneous termination">
        <sequence resource="EMBL" id="CP000034"/>
    </conflict>
    <text>Truncated C-terminus.</text>
</comment>
<keyword id="KW-0413">Isomerase</keyword>
<keyword id="KW-1185">Reference proteome</keyword>
<protein>
    <recommendedName>
        <fullName>Putative L-ribulose-5-phosphate 3-epimerase UlaE</fullName>
        <ecNumber evidence="1">5.1.3.22</ecNumber>
    </recommendedName>
    <alternativeName>
        <fullName evidence="1">L-ascorbate utilization protein E</fullName>
    </alternativeName>
    <alternativeName>
        <fullName evidence="1">L-xylulose-5-phosphate 3-epimerase</fullName>
    </alternativeName>
</protein>
<feature type="chain" id="PRO_0000233258" description="Putative L-ribulose-5-phosphate 3-epimerase UlaE">
    <location>
        <begin position="1"/>
        <end position="284"/>
    </location>
</feature>
<dbReference type="EC" id="5.1.3.22" evidence="1"/>
<dbReference type="EMBL" id="CP000034">
    <property type="status" value="NOT_ANNOTATED_CDS"/>
    <property type="molecule type" value="Genomic_DNA"/>
</dbReference>
<dbReference type="SMR" id="P0C1B2"/>
<dbReference type="UniPathway" id="UPA00263">
    <property type="reaction ID" value="UER00379"/>
</dbReference>
<dbReference type="Proteomes" id="UP000002716">
    <property type="component" value="Chromosome"/>
</dbReference>
<dbReference type="GO" id="GO:0016861">
    <property type="term" value="F:intramolecular oxidoreductase activity, interconverting aldoses and ketoses"/>
    <property type="evidence" value="ECO:0007669"/>
    <property type="project" value="InterPro"/>
</dbReference>
<dbReference type="GO" id="GO:0034015">
    <property type="term" value="F:L-ribulose-5-phosphate 3-epimerase activity"/>
    <property type="evidence" value="ECO:0007669"/>
    <property type="project" value="UniProtKB-UniRule"/>
</dbReference>
<dbReference type="GO" id="GO:0019854">
    <property type="term" value="P:L-ascorbic acid catabolic process"/>
    <property type="evidence" value="ECO:0007669"/>
    <property type="project" value="UniProtKB-UniRule"/>
</dbReference>
<dbReference type="FunFam" id="3.20.20.150:FF:000003">
    <property type="entry name" value="L-ribulose-5-phosphate 3-epimerase UlaE"/>
    <property type="match status" value="1"/>
</dbReference>
<dbReference type="Gene3D" id="3.20.20.150">
    <property type="entry name" value="Divalent-metal-dependent TIM barrel enzymes"/>
    <property type="match status" value="1"/>
</dbReference>
<dbReference type="HAMAP" id="MF_01951">
    <property type="entry name" value="UlaE"/>
    <property type="match status" value="1"/>
</dbReference>
<dbReference type="InterPro" id="IPR004560">
    <property type="entry name" value="L-Ru-5P_3-Epase"/>
</dbReference>
<dbReference type="InterPro" id="IPR023492">
    <property type="entry name" value="L-Ru-5P_3-Epase_Enterobacteria"/>
</dbReference>
<dbReference type="InterPro" id="IPR050417">
    <property type="entry name" value="Sugar_Epim/Isomerase"/>
</dbReference>
<dbReference type="InterPro" id="IPR036237">
    <property type="entry name" value="Xyl_isomerase-like_sf"/>
</dbReference>
<dbReference type="InterPro" id="IPR013022">
    <property type="entry name" value="Xyl_isomerase-like_TIM-brl"/>
</dbReference>
<dbReference type="NCBIfam" id="TIGR00542">
    <property type="entry name" value="hxl6Piso_put"/>
    <property type="match status" value="1"/>
</dbReference>
<dbReference type="NCBIfam" id="NF009688">
    <property type="entry name" value="PRK13209.1"/>
    <property type="match status" value="1"/>
</dbReference>
<dbReference type="NCBIfam" id="NF009689">
    <property type="entry name" value="PRK13210.1"/>
    <property type="match status" value="1"/>
</dbReference>
<dbReference type="PANTHER" id="PTHR43489">
    <property type="entry name" value="ISOMERASE"/>
    <property type="match status" value="1"/>
</dbReference>
<dbReference type="PANTHER" id="PTHR43489:SF8">
    <property type="entry name" value="L-RIBULOSE-5-PHOSPHATE 3-EPIMERASE ULAE"/>
    <property type="match status" value="1"/>
</dbReference>
<dbReference type="Pfam" id="PF01261">
    <property type="entry name" value="AP_endonuc_2"/>
    <property type="match status" value="1"/>
</dbReference>
<dbReference type="SUPFAM" id="SSF51658">
    <property type="entry name" value="Xylose isomerase-like"/>
    <property type="match status" value="1"/>
</dbReference>
<sequence>MLSKQIPLGIYEKALPAGECWLERLQLAKTLGFDFVEMSVDETDERLSRLDWSREQRLALVNAIVETGVRVPSMCLSAHRRFPLGSEDDAVRAQGLEIMRKAIQFAQDVGIRGIQLAGYDVYYQEANNETRRRFRDGLKESVEMASRAQVTLAMEIMDYPLMNSISKALGYAHYLNNPWFQLYPDIGNLSAWDNDVQMELQAGMGHIVAVHVKDTKPGVFKNVPFGEGVVDFERCFETLKQSGYCGPYLIEMWSETAEDPAAEVAKARDWVKARMAKAGMVEAA</sequence>